<gene>
    <name type="ordered locus">PP_0992</name>
</gene>
<protein>
    <recommendedName>
        <fullName evidence="1">UPF0276 protein PP_0992</fullName>
    </recommendedName>
</protein>
<feature type="chain" id="PRO_0000192703" description="UPF0276 protein PP_0992">
    <location>
        <begin position="1"/>
        <end position="277"/>
    </location>
</feature>
<organism>
    <name type="scientific">Pseudomonas putida (strain ATCC 47054 / DSM 6125 / CFBP 8728 / NCIMB 11950 / KT2440)</name>
    <dbReference type="NCBI Taxonomy" id="160488"/>
    <lineage>
        <taxon>Bacteria</taxon>
        <taxon>Pseudomonadati</taxon>
        <taxon>Pseudomonadota</taxon>
        <taxon>Gammaproteobacteria</taxon>
        <taxon>Pseudomonadales</taxon>
        <taxon>Pseudomonadaceae</taxon>
        <taxon>Pseudomonas</taxon>
    </lineage>
</organism>
<keyword id="KW-1185">Reference proteome</keyword>
<evidence type="ECO:0000255" key="1">
    <source>
        <dbReference type="HAMAP-Rule" id="MF_00697"/>
    </source>
</evidence>
<comment type="similarity">
    <text evidence="1">Belongs to the UPF0276 family.</text>
</comment>
<name>Y992_PSEPK</name>
<dbReference type="EMBL" id="AE015451">
    <property type="protein sequence ID" value="AAN66617.1"/>
    <property type="molecule type" value="Genomic_DNA"/>
</dbReference>
<dbReference type="RefSeq" id="NP_743153.1">
    <property type="nucleotide sequence ID" value="NC_002947.4"/>
</dbReference>
<dbReference type="RefSeq" id="WP_010952178.1">
    <property type="nucleotide sequence ID" value="NZ_CP169744.1"/>
</dbReference>
<dbReference type="SMR" id="Q88P61"/>
<dbReference type="STRING" id="160488.PP_0992"/>
<dbReference type="PaxDb" id="160488-PP_0992"/>
<dbReference type="DNASU" id="1044919"/>
<dbReference type="KEGG" id="ppu:PP_0992"/>
<dbReference type="PATRIC" id="fig|160488.4.peg.1052"/>
<dbReference type="eggNOG" id="COG3220">
    <property type="taxonomic scope" value="Bacteria"/>
</dbReference>
<dbReference type="HOGENOM" id="CLU_064263_0_0_6"/>
<dbReference type="OrthoDB" id="9763101at2"/>
<dbReference type="PhylomeDB" id="Q88P61"/>
<dbReference type="BioCyc" id="PPUT160488:G1G01-1065-MONOMER"/>
<dbReference type="Proteomes" id="UP000000556">
    <property type="component" value="Chromosome"/>
</dbReference>
<dbReference type="Gene3D" id="3.20.20.150">
    <property type="entry name" value="Divalent-metal-dependent TIM barrel enzymes"/>
    <property type="match status" value="1"/>
</dbReference>
<dbReference type="HAMAP" id="MF_00697">
    <property type="entry name" value="UPF0276"/>
    <property type="match status" value="1"/>
</dbReference>
<dbReference type="InterPro" id="IPR007801">
    <property type="entry name" value="MbnB/TglH/ChrH"/>
</dbReference>
<dbReference type="InterPro" id="IPR036237">
    <property type="entry name" value="Xyl_isomerase-like_sf"/>
</dbReference>
<dbReference type="NCBIfam" id="NF003818">
    <property type="entry name" value="PRK05409.1"/>
    <property type="match status" value="1"/>
</dbReference>
<dbReference type="PANTHER" id="PTHR42194">
    <property type="entry name" value="UPF0276 PROTEIN HI_1600"/>
    <property type="match status" value="1"/>
</dbReference>
<dbReference type="PANTHER" id="PTHR42194:SF1">
    <property type="entry name" value="UPF0276 PROTEIN HI_1600"/>
    <property type="match status" value="1"/>
</dbReference>
<dbReference type="Pfam" id="PF05114">
    <property type="entry name" value="MbnB_TglH_ChrH"/>
    <property type="match status" value="1"/>
</dbReference>
<dbReference type="SUPFAM" id="SSF51658">
    <property type="entry name" value="Xylose isomerase-like"/>
    <property type="match status" value="1"/>
</dbReference>
<accession>Q88P61</accession>
<sequence>MNTDARMGAGVSLKAEHYDQALACNLEGLWFEVHPENYMVGGPRLAWLNRIAERHPVSLHGVALSLAADAAPDQDHLQRLRALCDQIEPVLVSEHLAWSTWQGHYHPDLLPFPRSNEALQRIAENIQRCQEVLGRRISIENPSHYLQLQGHEWDEIDFLGELTRRTGCGLLLDINNVYVSAHNLGFSATAYLDRFPAQAITEVHLAGHSDDDQGSLLIDSHDAQVAEPVWALYRKLVSRVGPRPTLIERDDKLPPFTELLAERSIAQSIMTCPGVLP</sequence>
<proteinExistence type="inferred from homology"/>
<reference key="1">
    <citation type="journal article" date="2002" name="Environ. Microbiol.">
        <title>Complete genome sequence and comparative analysis of the metabolically versatile Pseudomonas putida KT2440.</title>
        <authorList>
            <person name="Nelson K.E."/>
            <person name="Weinel C."/>
            <person name="Paulsen I.T."/>
            <person name="Dodson R.J."/>
            <person name="Hilbert H."/>
            <person name="Martins dos Santos V.A.P."/>
            <person name="Fouts D.E."/>
            <person name="Gill S.R."/>
            <person name="Pop M."/>
            <person name="Holmes M."/>
            <person name="Brinkac L.M."/>
            <person name="Beanan M.J."/>
            <person name="DeBoy R.T."/>
            <person name="Daugherty S.C."/>
            <person name="Kolonay J.F."/>
            <person name="Madupu R."/>
            <person name="Nelson W.C."/>
            <person name="White O."/>
            <person name="Peterson J.D."/>
            <person name="Khouri H.M."/>
            <person name="Hance I."/>
            <person name="Chris Lee P."/>
            <person name="Holtzapple E.K."/>
            <person name="Scanlan D."/>
            <person name="Tran K."/>
            <person name="Moazzez A."/>
            <person name="Utterback T.R."/>
            <person name="Rizzo M."/>
            <person name="Lee K."/>
            <person name="Kosack D."/>
            <person name="Moestl D."/>
            <person name="Wedler H."/>
            <person name="Lauber J."/>
            <person name="Stjepandic D."/>
            <person name="Hoheisel J."/>
            <person name="Straetz M."/>
            <person name="Heim S."/>
            <person name="Kiewitz C."/>
            <person name="Eisen J.A."/>
            <person name="Timmis K.N."/>
            <person name="Duesterhoeft A."/>
            <person name="Tuemmler B."/>
            <person name="Fraser C.M."/>
        </authorList>
    </citation>
    <scope>NUCLEOTIDE SEQUENCE [LARGE SCALE GENOMIC DNA]</scope>
    <source>
        <strain>ATCC 47054 / DSM 6125 / CFBP 8728 / NCIMB 11950 / KT2440</strain>
    </source>
</reference>